<gene>
    <name type="ordered locus">Os03g0721900</name>
    <name type="ordered locus">LOC_Os03g51200</name>
    <name type="ORF">B1377B10.25</name>
    <name type="ORF">OsJ_011892</name>
    <name type="ORF">OSJNBa0031O09.03</name>
</gene>
<name>H2AXA_ORYSJ</name>
<sequence length="137" mass="14271">MSSSQGGGGRGKAKTTKAVSRSSKAGLQFPVGRIARYLKAGKYAERVGAGAPVYLSAVLEYLAAEVLELAGNAARDNKKNRIVPRHIQLAVRNDEELSRLLGTVTIAAGGVLPNIQQVLLPKKGGGKGDIGSASQEF</sequence>
<evidence type="ECO:0000250" key="1"/>
<evidence type="ECO:0000256" key="2">
    <source>
        <dbReference type="SAM" id="MobiDB-lite"/>
    </source>
</evidence>
<evidence type="ECO:0000305" key="3"/>
<feature type="chain" id="PRO_0000055257" description="Probable histone H2AXa">
    <location>
        <begin position="1"/>
        <end position="137"/>
    </location>
</feature>
<feature type="region of interest" description="Disordered" evidence="2">
    <location>
        <begin position="1"/>
        <end position="21"/>
    </location>
</feature>
<feature type="short sequence motif" description="[ST]-Q motif">
    <location>
        <begin position="134"/>
        <end position="135"/>
    </location>
</feature>
<feature type="compositionally biased region" description="Gly residues" evidence="2">
    <location>
        <begin position="1"/>
        <end position="10"/>
    </location>
</feature>
<feature type="modified residue" description="Phosphoserine; by ATM and ATR" evidence="3">
    <location>
        <position position="134"/>
    </location>
</feature>
<feature type="sequence conflict" description="In Ref. 5; EAZ28409." evidence="3" ref="5">
    <original>S</original>
    <variation>P</variation>
    <location>
        <position position="3"/>
    </location>
</feature>
<dbReference type="EMBL" id="AC146936">
    <property type="protein sequence ID" value="AAX95698.1"/>
    <property type="molecule type" value="Genomic_DNA"/>
</dbReference>
<dbReference type="EMBL" id="AC147426">
    <property type="protein sequence ID" value="AAT77853.1"/>
    <property type="molecule type" value="Genomic_DNA"/>
</dbReference>
<dbReference type="EMBL" id="AF377946">
    <property type="protein sequence ID" value="AAM47301.1"/>
    <property type="molecule type" value="Genomic_DNA"/>
</dbReference>
<dbReference type="EMBL" id="DP000009">
    <property type="protein sequence ID" value="ABF98595.1"/>
    <property type="molecule type" value="Genomic_DNA"/>
</dbReference>
<dbReference type="EMBL" id="AP008209">
    <property type="protein sequence ID" value="BAF13020.1"/>
    <property type="molecule type" value="Genomic_DNA"/>
</dbReference>
<dbReference type="EMBL" id="AP014959">
    <property type="status" value="NOT_ANNOTATED_CDS"/>
    <property type="molecule type" value="Genomic_DNA"/>
</dbReference>
<dbReference type="EMBL" id="CM000140">
    <property type="protein sequence ID" value="EAZ28409.1"/>
    <property type="molecule type" value="Genomic_DNA"/>
</dbReference>
<dbReference type="RefSeq" id="XP_015628892.1">
    <property type="nucleotide sequence ID" value="XM_015773406.1"/>
</dbReference>
<dbReference type="SMR" id="Q8LLP5"/>
<dbReference type="FunCoup" id="Q8LLP5">
    <property type="interactions" value="1717"/>
</dbReference>
<dbReference type="STRING" id="39947.Q8LLP5"/>
<dbReference type="PaxDb" id="39947-Q8LLP5"/>
<dbReference type="KEGG" id="dosa:Os03g0721900"/>
<dbReference type="InParanoid" id="Q8LLP5"/>
<dbReference type="OrthoDB" id="9421954at2759"/>
<dbReference type="Proteomes" id="UP000000763">
    <property type="component" value="Chromosome 3"/>
</dbReference>
<dbReference type="Proteomes" id="UP000007752">
    <property type="component" value="Chromosome 3"/>
</dbReference>
<dbReference type="Proteomes" id="UP000059680">
    <property type="component" value="Chromosome 3"/>
</dbReference>
<dbReference type="GO" id="GO:0000786">
    <property type="term" value="C:nucleosome"/>
    <property type="evidence" value="ECO:0000318"/>
    <property type="project" value="GO_Central"/>
</dbReference>
<dbReference type="GO" id="GO:0005634">
    <property type="term" value="C:nucleus"/>
    <property type="evidence" value="ECO:0000318"/>
    <property type="project" value="GO_Central"/>
</dbReference>
<dbReference type="GO" id="GO:0003677">
    <property type="term" value="F:DNA binding"/>
    <property type="evidence" value="ECO:0007669"/>
    <property type="project" value="UniProtKB-KW"/>
</dbReference>
<dbReference type="GO" id="GO:0046982">
    <property type="term" value="F:protein heterodimerization activity"/>
    <property type="evidence" value="ECO:0007669"/>
    <property type="project" value="InterPro"/>
</dbReference>
<dbReference type="GO" id="GO:0030527">
    <property type="term" value="F:structural constituent of chromatin"/>
    <property type="evidence" value="ECO:0000318"/>
    <property type="project" value="GO_Central"/>
</dbReference>
<dbReference type="GO" id="GO:0031507">
    <property type="term" value="P:heterochromatin formation"/>
    <property type="evidence" value="ECO:0000318"/>
    <property type="project" value="GO_Central"/>
</dbReference>
<dbReference type="CDD" id="cd00074">
    <property type="entry name" value="HFD_H2A"/>
    <property type="match status" value="1"/>
</dbReference>
<dbReference type="FunFam" id="1.10.20.10:FF:000009">
    <property type="entry name" value="Histone H2A"/>
    <property type="match status" value="1"/>
</dbReference>
<dbReference type="Gene3D" id="1.10.20.10">
    <property type="entry name" value="Histone, subunit A"/>
    <property type="match status" value="1"/>
</dbReference>
<dbReference type="InterPro" id="IPR009072">
    <property type="entry name" value="Histone-fold"/>
</dbReference>
<dbReference type="InterPro" id="IPR002119">
    <property type="entry name" value="Histone_H2A"/>
</dbReference>
<dbReference type="InterPro" id="IPR007125">
    <property type="entry name" value="Histone_H2A/H2B/H3"/>
</dbReference>
<dbReference type="InterPro" id="IPR032454">
    <property type="entry name" value="Histone_H2A_C"/>
</dbReference>
<dbReference type="InterPro" id="IPR032458">
    <property type="entry name" value="Histone_H2A_CS"/>
</dbReference>
<dbReference type="PANTHER" id="PTHR23430">
    <property type="entry name" value="HISTONE H2A"/>
    <property type="match status" value="1"/>
</dbReference>
<dbReference type="Pfam" id="PF00125">
    <property type="entry name" value="Histone"/>
    <property type="match status" value="1"/>
</dbReference>
<dbReference type="Pfam" id="PF16211">
    <property type="entry name" value="Histone_H2A_C"/>
    <property type="match status" value="1"/>
</dbReference>
<dbReference type="PRINTS" id="PR00620">
    <property type="entry name" value="HISTONEH2A"/>
</dbReference>
<dbReference type="SMART" id="SM00414">
    <property type="entry name" value="H2A"/>
    <property type="match status" value="1"/>
</dbReference>
<dbReference type="SUPFAM" id="SSF47113">
    <property type="entry name" value="Histone-fold"/>
    <property type="match status" value="1"/>
</dbReference>
<dbReference type="PROSITE" id="PS00046">
    <property type="entry name" value="HISTONE_H2A"/>
    <property type="match status" value="1"/>
</dbReference>
<keyword id="KW-0158">Chromosome</keyword>
<keyword id="KW-0238">DNA-binding</keyword>
<keyword id="KW-0544">Nucleosome core</keyword>
<keyword id="KW-0539">Nucleus</keyword>
<keyword id="KW-0597">Phosphoprotein</keyword>
<keyword id="KW-1185">Reference proteome</keyword>
<organism>
    <name type="scientific">Oryza sativa subsp. japonica</name>
    <name type="common">Rice</name>
    <dbReference type="NCBI Taxonomy" id="39947"/>
    <lineage>
        <taxon>Eukaryota</taxon>
        <taxon>Viridiplantae</taxon>
        <taxon>Streptophyta</taxon>
        <taxon>Embryophyta</taxon>
        <taxon>Tracheophyta</taxon>
        <taxon>Spermatophyta</taxon>
        <taxon>Magnoliopsida</taxon>
        <taxon>Liliopsida</taxon>
        <taxon>Poales</taxon>
        <taxon>Poaceae</taxon>
        <taxon>BOP clade</taxon>
        <taxon>Oryzoideae</taxon>
        <taxon>Oryzeae</taxon>
        <taxon>Oryzinae</taxon>
        <taxon>Oryza</taxon>
        <taxon>Oryza sativa</taxon>
    </lineage>
</organism>
<reference key="1">
    <citation type="journal article" date="2005" name="Genome Res.">
        <title>Sequence, annotation, and analysis of synteny between rice chromosome 3 and diverged grass species.</title>
        <authorList>
            <consortium name="The rice chromosome 3 sequencing consortium"/>
            <person name="Buell C.R."/>
            <person name="Yuan Q."/>
            <person name="Ouyang S."/>
            <person name="Liu J."/>
            <person name="Zhu W."/>
            <person name="Wang A."/>
            <person name="Maiti R."/>
            <person name="Haas B."/>
            <person name="Wortman J."/>
            <person name="Pertea M."/>
            <person name="Jones K.M."/>
            <person name="Kim M."/>
            <person name="Overton L."/>
            <person name="Tsitrin T."/>
            <person name="Fadrosh D."/>
            <person name="Bera J."/>
            <person name="Weaver B."/>
            <person name="Jin S."/>
            <person name="Johri S."/>
            <person name="Reardon M."/>
            <person name="Webb K."/>
            <person name="Hill J."/>
            <person name="Moffat K."/>
            <person name="Tallon L."/>
            <person name="Van Aken S."/>
            <person name="Lewis M."/>
            <person name="Utterback T."/>
            <person name="Feldblyum T."/>
            <person name="Zismann V."/>
            <person name="Iobst S."/>
            <person name="Hsiao J."/>
            <person name="de Vazeille A.R."/>
            <person name="Salzberg S.L."/>
            <person name="White O."/>
            <person name="Fraser C.M."/>
            <person name="Yu Y."/>
            <person name="Kim H."/>
            <person name="Rambo T."/>
            <person name="Currie J."/>
            <person name="Collura K."/>
            <person name="Kernodle-Thompson S."/>
            <person name="Wei F."/>
            <person name="Kudrna K."/>
            <person name="Ammiraju J.S.S."/>
            <person name="Luo M."/>
            <person name="Goicoechea J.L."/>
            <person name="Wing R.A."/>
            <person name="Henry D."/>
            <person name="Oates R."/>
            <person name="Palmer M."/>
            <person name="Pries G."/>
            <person name="Saski C."/>
            <person name="Simmons J."/>
            <person name="Soderlund C."/>
            <person name="Nelson W."/>
            <person name="de la Bastide M."/>
            <person name="Spiegel L."/>
            <person name="Nascimento L."/>
            <person name="Huang E."/>
            <person name="Preston R."/>
            <person name="Zutavern T."/>
            <person name="Palmer L."/>
            <person name="O'Shaughnessy A."/>
            <person name="Dike S."/>
            <person name="McCombie W.R."/>
            <person name="Minx P."/>
            <person name="Cordum H."/>
            <person name="Wilson R."/>
            <person name="Jin W."/>
            <person name="Lee H.R."/>
            <person name="Jiang J."/>
            <person name="Jackson S."/>
        </authorList>
    </citation>
    <scope>NUCLEOTIDE SEQUENCE [LARGE SCALE GENOMIC DNA]</scope>
    <source>
        <strain>cv. Nipponbare</strain>
    </source>
</reference>
<reference key="2">
    <citation type="journal article" date="2005" name="Nature">
        <title>The map-based sequence of the rice genome.</title>
        <authorList>
            <consortium name="International rice genome sequencing project (IRGSP)"/>
        </authorList>
    </citation>
    <scope>NUCLEOTIDE SEQUENCE [LARGE SCALE GENOMIC DNA]</scope>
    <source>
        <strain>cv. Nipponbare</strain>
    </source>
</reference>
<reference key="3">
    <citation type="journal article" date="2008" name="Nucleic Acids Res.">
        <title>The rice annotation project database (RAP-DB): 2008 update.</title>
        <authorList>
            <consortium name="The rice annotation project (RAP)"/>
        </authorList>
    </citation>
    <scope>GENOME REANNOTATION</scope>
    <source>
        <strain>cv. Nipponbare</strain>
    </source>
</reference>
<reference key="4">
    <citation type="journal article" date="2013" name="Rice">
        <title>Improvement of the Oryza sativa Nipponbare reference genome using next generation sequence and optical map data.</title>
        <authorList>
            <person name="Kawahara Y."/>
            <person name="de la Bastide M."/>
            <person name="Hamilton J.P."/>
            <person name="Kanamori H."/>
            <person name="McCombie W.R."/>
            <person name="Ouyang S."/>
            <person name="Schwartz D.C."/>
            <person name="Tanaka T."/>
            <person name="Wu J."/>
            <person name="Zhou S."/>
            <person name="Childs K.L."/>
            <person name="Davidson R.M."/>
            <person name="Lin H."/>
            <person name="Quesada-Ocampo L."/>
            <person name="Vaillancourt B."/>
            <person name="Sakai H."/>
            <person name="Lee S.S."/>
            <person name="Kim J."/>
            <person name="Numa H."/>
            <person name="Itoh T."/>
            <person name="Buell C.R."/>
            <person name="Matsumoto T."/>
        </authorList>
    </citation>
    <scope>GENOME REANNOTATION</scope>
    <source>
        <strain>cv. Nipponbare</strain>
    </source>
</reference>
<reference key="5">
    <citation type="journal article" date="2005" name="PLoS Biol.">
        <title>The genomes of Oryza sativa: a history of duplications.</title>
        <authorList>
            <person name="Yu J."/>
            <person name="Wang J."/>
            <person name="Lin W."/>
            <person name="Li S."/>
            <person name="Li H."/>
            <person name="Zhou J."/>
            <person name="Ni P."/>
            <person name="Dong W."/>
            <person name="Hu S."/>
            <person name="Zeng C."/>
            <person name="Zhang J."/>
            <person name="Zhang Y."/>
            <person name="Li R."/>
            <person name="Xu Z."/>
            <person name="Li S."/>
            <person name="Li X."/>
            <person name="Zheng H."/>
            <person name="Cong L."/>
            <person name="Lin L."/>
            <person name="Yin J."/>
            <person name="Geng J."/>
            <person name="Li G."/>
            <person name="Shi J."/>
            <person name="Liu J."/>
            <person name="Lv H."/>
            <person name="Li J."/>
            <person name="Wang J."/>
            <person name="Deng Y."/>
            <person name="Ran L."/>
            <person name="Shi X."/>
            <person name="Wang X."/>
            <person name="Wu Q."/>
            <person name="Li C."/>
            <person name="Ren X."/>
            <person name="Wang J."/>
            <person name="Wang X."/>
            <person name="Li D."/>
            <person name="Liu D."/>
            <person name="Zhang X."/>
            <person name="Ji Z."/>
            <person name="Zhao W."/>
            <person name="Sun Y."/>
            <person name="Zhang Z."/>
            <person name="Bao J."/>
            <person name="Han Y."/>
            <person name="Dong L."/>
            <person name="Ji J."/>
            <person name="Chen P."/>
            <person name="Wu S."/>
            <person name="Liu J."/>
            <person name="Xiao Y."/>
            <person name="Bu D."/>
            <person name="Tan J."/>
            <person name="Yang L."/>
            <person name="Ye C."/>
            <person name="Zhang J."/>
            <person name="Xu J."/>
            <person name="Zhou Y."/>
            <person name="Yu Y."/>
            <person name="Zhang B."/>
            <person name="Zhuang S."/>
            <person name="Wei H."/>
            <person name="Liu B."/>
            <person name="Lei M."/>
            <person name="Yu H."/>
            <person name="Li Y."/>
            <person name="Xu H."/>
            <person name="Wei S."/>
            <person name="He X."/>
            <person name="Fang L."/>
            <person name="Zhang Z."/>
            <person name="Zhang Y."/>
            <person name="Huang X."/>
            <person name="Su Z."/>
            <person name="Tong W."/>
            <person name="Li J."/>
            <person name="Tong Z."/>
            <person name="Li S."/>
            <person name="Ye J."/>
            <person name="Wang L."/>
            <person name="Fang L."/>
            <person name="Lei T."/>
            <person name="Chen C.-S."/>
            <person name="Chen H.-C."/>
            <person name="Xu Z."/>
            <person name="Li H."/>
            <person name="Huang H."/>
            <person name="Zhang F."/>
            <person name="Xu H."/>
            <person name="Li N."/>
            <person name="Zhao C."/>
            <person name="Li S."/>
            <person name="Dong L."/>
            <person name="Huang Y."/>
            <person name="Li L."/>
            <person name="Xi Y."/>
            <person name="Qi Q."/>
            <person name="Li W."/>
            <person name="Zhang B."/>
            <person name="Hu W."/>
            <person name="Zhang Y."/>
            <person name="Tian X."/>
            <person name="Jiao Y."/>
            <person name="Liang X."/>
            <person name="Jin J."/>
            <person name="Gao L."/>
            <person name="Zheng W."/>
            <person name="Hao B."/>
            <person name="Liu S.-M."/>
            <person name="Wang W."/>
            <person name="Yuan L."/>
            <person name="Cao M."/>
            <person name="McDermott J."/>
            <person name="Samudrala R."/>
            <person name="Wang J."/>
            <person name="Wong G.K.-S."/>
            <person name="Yang H."/>
        </authorList>
    </citation>
    <scope>NUCLEOTIDE SEQUENCE [LARGE SCALE GENOMIC DNA]</scope>
    <source>
        <strain>cv. Nipponbare</strain>
    </source>
</reference>
<comment type="function">
    <text evidence="1">Variant histone H2A which replaces conventional H2A in a subset of nucleosomes. Nucleosomes wrap and compact DNA into chromatin, limiting DNA accessibility to the cellular machineries which require DNA as a template. Histones thereby play a central role in transcription regulation, DNA repair, DNA replication and chromosomal stability. DNA accessibility is regulated via a complex set of post-translational modifications of histones, also called histone code, and nucleosome remodeling. Required for checkpoint-mediated arrest of cell cycle progression in response to low doses of ionizing radiation and for efficient repair of DNA double strand breaks (DSBs) specifically when modified by C-terminal phosphorylation (By similarity).</text>
</comment>
<comment type="subunit">
    <text evidence="1">The nucleosome is a histone octamer containing two molecules each of H2A, H2B, H3 and H4 assembled in one H3-H4 heterotetramer and two H2A-H2B heterodimers. The octamer wraps approximately 147 bp of DNA. Interacts with numerous proteins required for DNA damage signaling and repair when phosphorylated on Ser-134 (By similarity).</text>
</comment>
<comment type="subcellular location">
    <subcellularLocation>
        <location evidence="1">Nucleus</location>
    </subcellularLocation>
    <subcellularLocation>
        <location evidence="1">Chromosome</location>
    </subcellularLocation>
</comment>
<comment type="domain">
    <text>The [ST]-Q motif constitutes a recognition sequence for kinases from the PI3/PI4-kinase family.</text>
</comment>
<comment type="PTM">
    <text evidence="1">Phosphorylated to form H2AXS139ph (gamma-H2AX) in response to DNA double strand breaks (DSBs) generated by exogenous genotoxic agents and by stalled replication forks, and may also occur during meiotic recombination events. Phosphorylation can extend up to several thousand nucleosomes from the actual site of the DSB and may mark the surrounding chromatin for recruitment of proteins required for DNA damage signaling and repair. Widespread phosphorylation may also serve to amplify the damage signal or aid repair of persistent lesions. H2AXS139ph in response to ionizing radiation is mediated by ATM while defects in DNA replication induce H2AXS139ph subsequent to activation of ATR. Dephosphorylation of H2AXS139ph by PP2A is required for DNA DSB repair (By similarity).</text>
</comment>
<comment type="similarity">
    <text evidence="3">Belongs to the histone H2A family.</text>
</comment>
<comment type="caution">
    <text evidence="3">To ensure consistency between histone entries, we follow the 'Brno' nomenclature for histone modifications, with positions referring to those used in the literature for the 'closest' model organism. Due to slight variations in histone sequences between organisms and to the presence of initiator methionine in UniProtKB/Swiss-Prot sequences, the actual positions of modified amino acids in the sequence generally differ. In this entry the following conventions are used: H2AXS139ph = phosphorylated Ser-134.</text>
</comment>
<protein>
    <recommendedName>
        <fullName>Probable histone H2AXa</fullName>
    </recommendedName>
</protein>
<accession>Q8LLP5</accession>
<accession>A3AM70</accession>
<accession>Q10DS3</accession>
<proteinExistence type="inferred from homology"/>